<name>CLSPN_MOUSE</name>
<reference key="1">
    <citation type="journal article" date="2009" name="PLoS Biol.">
        <title>Lineage-specific biology revealed by a finished genome assembly of the mouse.</title>
        <authorList>
            <person name="Church D.M."/>
            <person name="Goodstadt L."/>
            <person name="Hillier L.W."/>
            <person name="Zody M.C."/>
            <person name="Goldstein S."/>
            <person name="She X."/>
            <person name="Bult C.J."/>
            <person name="Agarwala R."/>
            <person name="Cherry J.L."/>
            <person name="DiCuccio M."/>
            <person name="Hlavina W."/>
            <person name="Kapustin Y."/>
            <person name="Meric P."/>
            <person name="Maglott D."/>
            <person name="Birtle Z."/>
            <person name="Marques A.C."/>
            <person name="Graves T."/>
            <person name="Zhou S."/>
            <person name="Teague B."/>
            <person name="Potamousis K."/>
            <person name="Churas C."/>
            <person name="Place M."/>
            <person name="Herschleb J."/>
            <person name="Runnheim R."/>
            <person name="Forrest D."/>
            <person name="Amos-Landgraf J."/>
            <person name="Schwartz D.C."/>
            <person name="Cheng Z."/>
            <person name="Lindblad-Toh K."/>
            <person name="Eichler E.E."/>
            <person name="Ponting C.P."/>
        </authorList>
    </citation>
    <scope>NUCLEOTIDE SEQUENCE [LARGE SCALE GENOMIC DNA]</scope>
    <source>
        <strain>C57BL/6J</strain>
    </source>
</reference>
<reference key="2">
    <citation type="journal article" date="2004" name="Genome Res.">
        <title>The status, quality, and expansion of the NIH full-length cDNA project: the Mammalian Gene Collection (MGC).</title>
        <authorList>
            <consortium name="The MGC Project Team"/>
        </authorList>
    </citation>
    <scope>NUCLEOTIDE SEQUENCE [LARGE SCALE MRNA]</scope>
    <source>
        <tissue>Limb</tissue>
    </source>
</reference>
<reference key="3">
    <citation type="submission" date="2003-06" db="EMBL/GenBank/DDBJ databases">
        <title>Checkpoint control in gametogenesis.</title>
        <authorList>
            <person name="Hasthorpe S."/>
        </authorList>
    </citation>
    <scope>NUCLEOTIDE SEQUENCE [MRNA] OF 906-1315</scope>
    <source>
        <strain>ICR</strain>
        <tissue>Testis</tissue>
    </source>
</reference>
<reference key="4">
    <citation type="journal article" date="2009" name="Immunity">
        <title>The phagosomal proteome in interferon-gamma-activated macrophages.</title>
        <authorList>
            <person name="Trost M."/>
            <person name="English L."/>
            <person name="Lemieux S."/>
            <person name="Courcelles M."/>
            <person name="Desjardins M."/>
            <person name="Thibault P."/>
        </authorList>
    </citation>
    <scope>PHOSPHORYLATION [LARGE SCALE ANALYSIS] AT SER-1265</scope>
    <scope>IDENTIFICATION BY MASS SPECTROMETRY [LARGE SCALE ANALYSIS]</scope>
</reference>
<reference key="5">
    <citation type="journal article" date="2010" name="Cell">
        <title>A tissue-specific atlas of mouse protein phosphorylation and expression.</title>
        <authorList>
            <person name="Huttlin E.L."/>
            <person name="Jedrychowski M.P."/>
            <person name="Elias J.E."/>
            <person name="Goswami T."/>
            <person name="Rad R."/>
            <person name="Beausoleil S.A."/>
            <person name="Villen J."/>
            <person name="Haas W."/>
            <person name="Sowa M.E."/>
            <person name="Gygi S.P."/>
        </authorList>
    </citation>
    <scope>PHOSPHORYLATION [LARGE SCALE ANALYSIS] AT SER-26; SER-42; SER-46; SER-53; SER-65; SER-67; SER-109; SER-112; SER-119; SER-816; SER-823; SER-1133 AND SER-1265</scope>
    <scope>IDENTIFICATION BY MASS SPECTROMETRY [LARGE SCALE ANALYSIS]</scope>
    <source>
        <tissue>Lung</tissue>
        <tissue>Spleen</tissue>
        <tissue>Testis</tissue>
    </source>
</reference>
<reference key="6">
    <citation type="journal article" date="2016" name="Nat. Commun.">
        <title>Claspin recruits Cdc7 kinase for initiation of DNA replication in human cells.</title>
        <authorList>
            <person name="Yang C.C."/>
            <person name="Suzuki M."/>
            <person name="Yamakawa S."/>
            <person name="Uno S."/>
            <person name="Ishii A."/>
            <person name="Yamazaki S."/>
            <person name="Fukatsu R."/>
            <person name="Fujisawa R."/>
            <person name="Sakimura K."/>
            <person name="Tsurimoto T."/>
            <person name="Masai H."/>
        </authorList>
    </citation>
    <scope>FUNCTION</scope>
    <scope>DISRUPTION PHENOTYPE</scope>
</reference>
<sequence length="1315" mass="146715">MTGEVGSEVNLEVNDLKLLSQEAADSPVDSGQGSFETLEPLSERDSDEEIFVSKKPKSRKVLQDSDSEAEDRDDAPEKPTYDDSAEDTQENLHSGKSQSRSFPKALADSDESDMEETPSQESPETQEAPSLEPGHQTGHSVDFTTGRKLSKTLLREGAEGKAKSKRRLEKEERTMEKIRRLKKKETRCEESDADRPLNDSGCLLEDSDLFETGLEEENDSALEDEESLESIRAAVKNKVKNRKKKEPTLESEAFSLEDGNELSKGSARKERKAARLSKEALKKLHSETQRLVRESALNLPYHMPESKTIHDFFKRKPRPTCQGSAMALLKSCKYQSGHYKETVNPADAAGMGAEDSSRGSEQRTGAGIAAETNVLSEVSEEAGITAGSDEACGKDPVRRGELEIEETEKHSDDRPYSPGDRSMSQQESSIPRIEDNEGHQAGDLTESDPPALEGEELKTVEKTDAKEGMPEQKTQSAAAAAVAVVTAAAAPPEKVRRFTVDRLRQLGVDVSSQPRLGADEDSFVILDEPKTNRELEALKQRFWRHANPAASPRACQTVNVNIIVKDLGTNGKEELKAEVVPVTLAAEKLEGASHAKPGEKLQMLKAKLQEAMKLRRLEERQKRQALFKLDNEDGFEEEEEEEEMTDESEEDGEEETTEYLLGSEDTETKDEKETDKENTDTSSDIGKSVALCVPKPLSSDSTLLLFKDSSSKMGYFPTEEKSETDEYLAKQSDKLDEDDSSSLLTKESSHNSSFELIGSTIPSYQPCNRQIGRGASFLPTAGFRSPSPGLFRGSLISSASKSSGKLSEPSLPVEDSQDLYTASPEPKTLFLGAGDFQFCLEDDTQSQLLDADGFLNIRNHRHRYQAVKPQLPLASMDENAMDANMDELLDLCTGQFTSQPEEKCQPRKNDKKENMEELLNLCSGKFPTQDASPVAPLGLRSQEKESSTEDPMEEALALCSGSFPTDREEEGEEEEFGDFQLVSKENGFASDEDEHSDSNDEELALDLEDDEEELLKQSEKMKRQMRLKKYLEDEAEVSGSDVGSEDEYDGEEIDEYEEDVIDEVLPSDEELESQIKKIHMKTMLDDDKRRLRLYQERYLADGDLHSDGPGRTRKFRWKHIDDTSQMDLFHRDSDDDQVEEQLDETEAKWRKERIEREQWLREQAQQGKIAADEEDIGDDSQFMMLAKKVTAKALQKNASHTVVVQESKSVLRNPFETIRPGGAHQLKTGSLLNQPKAVLQKLAALSDLNPSAPRNSRNFVFHTLSPTKAEAAKDSSKPQVRRRGLSSMMSPSPKRLKTNGSSPGPKRSIFRYLES</sequence>
<organism>
    <name type="scientific">Mus musculus</name>
    <name type="common">Mouse</name>
    <dbReference type="NCBI Taxonomy" id="10090"/>
    <lineage>
        <taxon>Eukaryota</taxon>
        <taxon>Metazoa</taxon>
        <taxon>Chordata</taxon>
        <taxon>Craniata</taxon>
        <taxon>Vertebrata</taxon>
        <taxon>Euteleostomi</taxon>
        <taxon>Mammalia</taxon>
        <taxon>Eutheria</taxon>
        <taxon>Euarchontoglires</taxon>
        <taxon>Glires</taxon>
        <taxon>Rodentia</taxon>
        <taxon>Myomorpha</taxon>
        <taxon>Muroidea</taxon>
        <taxon>Muridae</taxon>
        <taxon>Murinae</taxon>
        <taxon>Mus</taxon>
        <taxon>Mus</taxon>
    </lineage>
</organism>
<feature type="chain" id="PRO_0000089876" description="Claspin">
    <location>
        <begin position="1"/>
        <end position="1315"/>
    </location>
</feature>
<feature type="repeat" description="CKB motif 1">
    <location>
        <begin position="887"/>
        <end position="896"/>
    </location>
</feature>
<feature type="repeat" description="CKB motif 2">
    <location>
        <begin position="917"/>
        <end position="926"/>
    </location>
</feature>
<feature type="repeat" description="CKB motif 3">
    <location>
        <begin position="954"/>
        <end position="963"/>
    </location>
</feature>
<feature type="region of interest" description="Disordered" evidence="3">
    <location>
        <begin position="22"/>
        <end position="276"/>
    </location>
</feature>
<feature type="region of interest" description="Disordered" evidence="3">
    <location>
        <begin position="345"/>
        <end position="474"/>
    </location>
</feature>
<feature type="region of interest" description="Disordered" evidence="3">
    <location>
        <begin position="625"/>
        <end position="691"/>
    </location>
</feature>
<feature type="region of interest" description="Disordered" evidence="3">
    <location>
        <begin position="713"/>
        <end position="750"/>
    </location>
</feature>
<feature type="region of interest" description="Disordered" evidence="3">
    <location>
        <begin position="924"/>
        <end position="1002"/>
    </location>
</feature>
<feature type="region of interest" description="Acidic patch" evidence="1">
    <location>
        <begin position="966"/>
        <end position="1063"/>
    </location>
</feature>
<feature type="region of interest" description="Disordered" evidence="3">
    <location>
        <begin position="1032"/>
        <end position="1052"/>
    </location>
</feature>
<feature type="region of interest" description="Disordered" evidence="3">
    <location>
        <begin position="1264"/>
        <end position="1315"/>
    </location>
</feature>
<feature type="coiled-coil region" evidence="2">
    <location>
        <begin position="159"/>
        <end position="187"/>
    </location>
</feature>
<feature type="coiled-coil region" evidence="2">
    <location>
        <begin position="599"/>
        <end position="626"/>
    </location>
</feature>
<feature type="coiled-coil region" evidence="2">
    <location>
        <begin position="1001"/>
        <end position="1036"/>
    </location>
</feature>
<feature type="compositionally biased region" description="Acidic residues" evidence="3">
    <location>
        <begin position="65"/>
        <end position="74"/>
    </location>
</feature>
<feature type="compositionally biased region" description="Polar residues" evidence="3">
    <location>
        <begin position="91"/>
        <end position="101"/>
    </location>
</feature>
<feature type="compositionally biased region" description="Acidic residues" evidence="3">
    <location>
        <begin position="108"/>
        <end position="118"/>
    </location>
</feature>
<feature type="compositionally biased region" description="Polar residues" evidence="3">
    <location>
        <begin position="119"/>
        <end position="128"/>
    </location>
</feature>
<feature type="compositionally biased region" description="Basic and acidic residues" evidence="3">
    <location>
        <begin position="153"/>
        <end position="178"/>
    </location>
</feature>
<feature type="compositionally biased region" description="Basic and acidic residues" evidence="3">
    <location>
        <begin position="186"/>
        <end position="197"/>
    </location>
</feature>
<feature type="compositionally biased region" description="Acidic residues" evidence="3">
    <location>
        <begin position="205"/>
        <end position="228"/>
    </location>
</feature>
<feature type="compositionally biased region" description="Basic residues" evidence="3">
    <location>
        <begin position="235"/>
        <end position="245"/>
    </location>
</feature>
<feature type="compositionally biased region" description="Basic and acidic residues" evidence="3">
    <location>
        <begin position="391"/>
        <end position="415"/>
    </location>
</feature>
<feature type="compositionally biased region" description="Basic and acidic residues" evidence="3">
    <location>
        <begin position="455"/>
        <end position="470"/>
    </location>
</feature>
<feature type="compositionally biased region" description="Acidic residues" evidence="3">
    <location>
        <begin position="632"/>
        <end position="657"/>
    </location>
</feature>
<feature type="compositionally biased region" description="Basic and acidic residues" evidence="3">
    <location>
        <begin position="669"/>
        <end position="679"/>
    </location>
</feature>
<feature type="compositionally biased region" description="Low complexity" evidence="3">
    <location>
        <begin position="741"/>
        <end position="750"/>
    </location>
</feature>
<feature type="compositionally biased region" description="Acidic residues" evidence="3">
    <location>
        <begin position="967"/>
        <end position="977"/>
    </location>
</feature>
<feature type="compositionally biased region" description="Acidic residues" evidence="3">
    <location>
        <begin position="990"/>
        <end position="1002"/>
    </location>
</feature>
<feature type="compositionally biased region" description="Acidic residues" evidence="3">
    <location>
        <begin position="1043"/>
        <end position="1052"/>
    </location>
</feature>
<feature type="site" description="Cleavage; by caspase-7" evidence="1">
    <location>
        <begin position="1049"/>
        <end position="1050"/>
    </location>
</feature>
<feature type="modified residue" description="Phosphoserine" evidence="7">
    <location>
        <position position="26"/>
    </location>
</feature>
<feature type="modified residue" description="Phosphoserine" evidence="7">
    <location>
        <position position="42"/>
    </location>
</feature>
<feature type="modified residue" description="Phosphoserine" evidence="7">
    <location>
        <position position="46"/>
    </location>
</feature>
<feature type="modified residue" description="Phosphoserine" evidence="7">
    <location>
        <position position="53"/>
    </location>
</feature>
<feature type="modified residue" description="Phosphoserine" evidence="7">
    <location>
        <position position="65"/>
    </location>
</feature>
<feature type="modified residue" description="Phosphoserine" evidence="7">
    <location>
        <position position="67"/>
    </location>
</feature>
<feature type="modified residue" description="Phosphoserine" evidence="7">
    <location>
        <position position="109"/>
    </location>
</feature>
<feature type="modified residue" description="Phosphoserine" evidence="7">
    <location>
        <position position="112"/>
    </location>
</feature>
<feature type="modified residue" description="Phosphoserine" evidence="7">
    <location>
        <position position="119"/>
    </location>
</feature>
<feature type="modified residue" description="Phosphoserine" evidence="1">
    <location>
        <position position="220"/>
    </location>
</feature>
<feature type="modified residue" description="Phosphoserine" evidence="1">
    <location>
        <position position="255"/>
    </location>
</feature>
<feature type="modified residue" description="Phosphoserine" evidence="1">
    <location>
        <position position="522"/>
    </location>
</feature>
<feature type="modified residue" description="Phosphoserine" evidence="1">
    <location>
        <position position="698"/>
    </location>
</feature>
<feature type="modified residue" description="Phosphoserine" evidence="1">
    <location>
        <position position="701"/>
    </location>
</feature>
<feature type="modified residue" description="Phosphoserine" evidence="1">
    <location>
        <position position="709"/>
    </location>
</feature>
<feature type="modified residue" description="Phosphoserine" evidence="1">
    <location>
        <position position="722"/>
    </location>
</feature>
<feature type="modified residue" description="Phosphoserine" evidence="1">
    <location>
        <position position="740"/>
    </location>
</feature>
<feature type="modified residue" description="Phosphoserine" evidence="1">
    <location>
        <position position="785"/>
    </location>
</feature>
<feature type="modified residue" description="Phosphoserine" evidence="1">
    <location>
        <position position="787"/>
    </location>
</feature>
<feature type="modified residue" description="Phosphoserine" evidence="1">
    <location>
        <position position="810"/>
    </location>
</feature>
<feature type="modified residue" description="Phosphoserine" evidence="7">
    <location>
        <position position="816"/>
    </location>
</feature>
<feature type="modified residue" description="Phosphoserine" evidence="7">
    <location>
        <position position="823"/>
    </location>
</feature>
<feature type="modified residue" description="N6-acetyllysine" evidence="1">
    <location>
        <position position="868"/>
    </location>
</feature>
<feature type="modified residue" description="Phosphothreonine; by CHEK1" evidence="1">
    <location>
        <position position="893"/>
    </location>
</feature>
<feature type="modified residue" description="Phosphoserine" evidence="1">
    <location>
        <position position="932"/>
    </location>
</feature>
<feature type="modified residue" description="Phosphoserine" evidence="1">
    <location>
        <position position="990"/>
    </location>
</feature>
<feature type="modified residue" description="Phosphoserine" evidence="1">
    <location>
        <position position="996"/>
    </location>
</feature>
<feature type="modified residue" description="Phosphoserine" evidence="1">
    <location>
        <position position="998"/>
    </location>
</feature>
<feature type="modified residue" description="Phosphoserine" evidence="7">
    <location>
        <position position="1133"/>
    </location>
</feature>
<feature type="modified residue" description="Phosphoserine" evidence="6 7">
    <location>
        <position position="1265"/>
    </location>
</feature>
<feature type="sequence conflict" description="In Ref. 2; AAH50848." evidence="5" ref="2">
    <original>Y</original>
    <variation>H</variation>
    <location>
        <position position="727"/>
    </location>
</feature>
<feature type="sequence conflict" description="In Ref. 3; AAP97538." evidence="5" ref="3">
    <original>E</original>
    <variation>EE</variation>
    <location>
        <position position="1013"/>
    </location>
</feature>
<comment type="function">
    <text evidence="1 4">Required for checkpoint mediated cell cycle arrest in response to inhibition of DNA replication or to DNA damage induced by both ionizing and UV irradiation (PubMed:27401717). Adapter protein which binds to BRCA1 and the checkpoint kinase CHEK1 and facilitates the ATR-dependent phosphorylation of both proteins (By similarity). Also required to maintain normal rates of replication fork progression during unperturbed DNA replication (PubMed:27401717). Binds directly to DNA, with particular affinity for branched or forked molecules and interacts with multiple protein components of the replisome such as the MCM2-7 complex and TIMELESS. Important for initiation of DNA replication, recruits kinase CDC7 to phosphorylate MCM2-7 components (By similarity).</text>
</comment>
<comment type="subunit">
    <text evidence="1">Interacts (phosphorylation-dependent) with CHEK1; regulates CLSPN function in checkpoint for DNA damage and replication. Interacts with ATR and RAD9A and these interactions are slightly reduced during checkpoint activation. Interacts with BRCA1 and this interaction increases during checkpoint activation. Interacts with TIMELESS; the interaction is required for leading-strand replication. Associates with the MCM2-7 complex and other replisome factors. Interacts (via the acidic patch) with CDC7; the interaction is required for phosphorylation of MCM proteins and CLASPIN by CDC7. Interacts with PCNA. Interacts with FZR1.</text>
</comment>
<comment type="subcellular location">
    <subcellularLocation>
        <location evidence="1">Nucleus</location>
    </subcellularLocation>
</comment>
<comment type="domain">
    <text evidence="1">The C-terminus of the protein contains 3 potential CHEK1-binding motifs (CKB motifs). Potential phosphorylation sites within CKB motif 1 and CKB motif 2 are required for interaction with CHEK1 (By similarity).</text>
</comment>
<comment type="domain">
    <text evidence="1">The acidic patch region is required for normal DNA replication. Interacts with the N-terminal segments and inhibits binding to DNA and PCNA. Mediates the interaction with the kinase CDC7 as well as some replisome factors and DNA polymerases.</text>
</comment>
<comment type="PTM">
    <text evidence="1">Phosphorylated. Undergoes ATR-dependent phosphorylation by CHEK1 during activation of DNA replication or damage checkpoints. Phosphorylation by CSNK1G1/CK1 promotes CHEK1 binding. Phosphorylated by CDC7 during DNA replication, phosphorylation inhibits interaction between the acidic patch and N-terminal segments leading to increased binding to DNA and PCNA.</text>
</comment>
<comment type="PTM">
    <text evidence="1">Ubiquitinated by the anaphase promoting complex/cyclosome (APC/C) during G1 phase, leading to its degradation by the proteasome. Ubiquitination is mediated via its interaction with FZR1/CDH1. Following DNA damage, it is deubiquitinated by USP28 in G2 phase, preventing its degradation (By similarity).</text>
</comment>
<comment type="PTM">
    <text evidence="1">Proteolytically cleaved by caspase-7 (CASP7) in response to apoptosis, leading to its inactivation.</text>
</comment>
<comment type="disruption phenotype">
    <text evidence="4">Knockout embryos die by E12.5.</text>
</comment>
<comment type="similarity">
    <text evidence="5">Belongs to the claspin family.</text>
</comment>
<gene>
    <name type="primary">Clspn</name>
</gene>
<proteinExistence type="evidence at protein level"/>
<dbReference type="EMBL" id="AL606935">
    <property type="status" value="NOT_ANNOTATED_CDS"/>
    <property type="molecule type" value="Genomic_DNA"/>
</dbReference>
<dbReference type="EMBL" id="BC050848">
    <property type="protein sequence ID" value="AAH50848.1"/>
    <property type="molecule type" value="mRNA"/>
</dbReference>
<dbReference type="EMBL" id="AY324187">
    <property type="protein sequence ID" value="AAP97538.1"/>
    <property type="molecule type" value="mRNA"/>
</dbReference>
<dbReference type="CCDS" id="CCDS18655.1"/>
<dbReference type="RefSeq" id="NP_780763.3">
    <property type="nucleotide sequence ID" value="NM_175554.4"/>
</dbReference>
<dbReference type="RefSeq" id="XP_011238843.1">
    <property type="nucleotide sequence ID" value="XM_011240541.4"/>
</dbReference>
<dbReference type="SMR" id="Q80YR7"/>
<dbReference type="BioGRID" id="234671">
    <property type="interactions" value="23"/>
</dbReference>
<dbReference type="FunCoup" id="Q80YR7">
    <property type="interactions" value="3120"/>
</dbReference>
<dbReference type="IntAct" id="Q80YR7">
    <property type="interactions" value="16"/>
</dbReference>
<dbReference type="STRING" id="10090.ENSMUSP00000045344"/>
<dbReference type="iPTMnet" id="Q80YR7"/>
<dbReference type="PhosphoSitePlus" id="Q80YR7"/>
<dbReference type="jPOST" id="Q80YR7"/>
<dbReference type="PaxDb" id="10090-ENSMUSP00000045344"/>
<dbReference type="PeptideAtlas" id="Q80YR7"/>
<dbReference type="ProteomicsDB" id="285495"/>
<dbReference type="Pumba" id="Q80YR7"/>
<dbReference type="Antibodypedia" id="17335">
    <property type="antibodies" value="109 antibodies from 30 providers"/>
</dbReference>
<dbReference type="DNASU" id="269582"/>
<dbReference type="Ensembl" id="ENSMUST00000048391.15">
    <property type="protein sequence ID" value="ENSMUSP00000045344.9"/>
    <property type="gene ID" value="ENSMUSG00000042489.16"/>
</dbReference>
<dbReference type="GeneID" id="269582"/>
<dbReference type="KEGG" id="mmu:269582"/>
<dbReference type="UCSC" id="uc008utm.2">
    <property type="organism name" value="mouse"/>
</dbReference>
<dbReference type="AGR" id="MGI:2445153"/>
<dbReference type="CTD" id="63967"/>
<dbReference type="MGI" id="MGI:2445153">
    <property type="gene designation" value="Clspn"/>
</dbReference>
<dbReference type="VEuPathDB" id="HostDB:ENSMUSG00000042489"/>
<dbReference type="eggNOG" id="KOG4156">
    <property type="taxonomic scope" value="Eukaryota"/>
</dbReference>
<dbReference type="GeneTree" id="ENSGT00390000012738"/>
<dbReference type="HOGENOM" id="CLU_005892_0_0_1"/>
<dbReference type="InParanoid" id="Q80YR7"/>
<dbReference type="OMA" id="TEMNGDH"/>
<dbReference type="OrthoDB" id="5859781at2759"/>
<dbReference type="TreeFam" id="TF328925"/>
<dbReference type="Reactome" id="R-MMU-111465">
    <property type="pathway name" value="Apoptotic cleavage of cellular proteins"/>
</dbReference>
<dbReference type="Reactome" id="R-MMU-176187">
    <property type="pathway name" value="Activation of ATR in response to replication stress"/>
</dbReference>
<dbReference type="Reactome" id="R-MMU-5689880">
    <property type="pathway name" value="Ub-specific processing proteases"/>
</dbReference>
<dbReference type="Reactome" id="R-MMU-5693607">
    <property type="pathway name" value="Processing of DNA double-strand break ends"/>
</dbReference>
<dbReference type="BioGRID-ORCS" id="269582">
    <property type="hits" value="12 hits in 115 CRISPR screens"/>
</dbReference>
<dbReference type="ChiTaRS" id="Clspn">
    <property type="organism name" value="mouse"/>
</dbReference>
<dbReference type="PRO" id="PR:Q80YR7"/>
<dbReference type="Proteomes" id="UP000000589">
    <property type="component" value="Chromosome 4"/>
</dbReference>
<dbReference type="RNAct" id="Q80YR7">
    <property type="molecule type" value="protein"/>
</dbReference>
<dbReference type="Bgee" id="ENSMUSG00000042489">
    <property type="expression patterns" value="Expressed in embryonic post-anal tail and 155 other cell types or tissues"/>
</dbReference>
<dbReference type="ExpressionAtlas" id="Q80YR7">
    <property type="expression patterns" value="baseline and differential"/>
</dbReference>
<dbReference type="GO" id="GO:0005794">
    <property type="term" value="C:Golgi apparatus"/>
    <property type="evidence" value="ECO:0007669"/>
    <property type="project" value="Ensembl"/>
</dbReference>
<dbReference type="GO" id="GO:0005654">
    <property type="term" value="C:nucleoplasm"/>
    <property type="evidence" value="ECO:0007669"/>
    <property type="project" value="Ensembl"/>
</dbReference>
<dbReference type="GO" id="GO:0005634">
    <property type="term" value="C:nucleus"/>
    <property type="evidence" value="ECO:0000266"/>
    <property type="project" value="MGI"/>
</dbReference>
<dbReference type="GO" id="GO:0010997">
    <property type="term" value="F:anaphase-promoting complex binding"/>
    <property type="evidence" value="ECO:0007669"/>
    <property type="project" value="Ensembl"/>
</dbReference>
<dbReference type="GO" id="GO:0000217">
    <property type="term" value="F:DNA secondary structure binding"/>
    <property type="evidence" value="ECO:0000266"/>
    <property type="project" value="MGI"/>
</dbReference>
<dbReference type="GO" id="GO:0006281">
    <property type="term" value="P:DNA repair"/>
    <property type="evidence" value="ECO:0007669"/>
    <property type="project" value="UniProtKB-KW"/>
</dbReference>
<dbReference type="GO" id="GO:0000076">
    <property type="term" value="P:DNA replication checkpoint signaling"/>
    <property type="evidence" value="ECO:0000266"/>
    <property type="project" value="MGI"/>
</dbReference>
<dbReference type="GO" id="GO:0033314">
    <property type="term" value="P:mitotic DNA replication checkpoint signaling"/>
    <property type="evidence" value="ECO:0007669"/>
    <property type="project" value="Ensembl"/>
</dbReference>
<dbReference type="GO" id="GO:0007095">
    <property type="term" value="P:mitotic G2 DNA damage checkpoint signaling"/>
    <property type="evidence" value="ECO:0000250"/>
    <property type="project" value="UniProtKB"/>
</dbReference>
<dbReference type="InterPro" id="IPR024146">
    <property type="entry name" value="Claspin"/>
</dbReference>
<dbReference type="PANTHER" id="PTHR14396">
    <property type="entry name" value="CLASPIN"/>
    <property type="match status" value="1"/>
</dbReference>
<dbReference type="PANTHER" id="PTHR14396:SF10">
    <property type="entry name" value="CLASPIN"/>
    <property type="match status" value="1"/>
</dbReference>
<evidence type="ECO:0000250" key="1">
    <source>
        <dbReference type="UniProtKB" id="Q9HAW4"/>
    </source>
</evidence>
<evidence type="ECO:0000255" key="2"/>
<evidence type="ECO:0000256" key="3">
    <source>
        <dbReference type="SAM" id="MobiDB-lite"/>
    </source>
</evidence>
<evidence type="ECO:0000269" key="4">
    <source>
    </source>
</evidence>
<evidence type="ECO:0000305" key="5"/>
<evidence type="ECO:0007744" key="6">
    <source>
    </source>
</evidence>
<evidence type="ECO:0007744" key="7">
    <source>
    </source>
</evidence>
<keyword id="KW-0007">Acetylation</keyword>
<keyword id="KW-0131">Cell cycle</keyword>
<keyword id="KW-0175">Coiled coil</keyword>
<keyword id="KW-0227">DNA damage</keyword>
<keyword id="KW-0234">DNA repair</keyword>
<keyword id="KW-0238">DNA-binding</keyword>
<keyword id="KW-0539">Nucleus</keyword>
<keyword id="KW-0597">Phosphoprotein</keyword>
<keyword id="KW-1185">Reference proteome</keyword>
<keyword id="KW-0677">Repeat</keyword>
<keyword id="KW-0832">Ubl conjugation</keyword>
<protein>
    <recommendedName>
        <fullName>Claspin</fullName>
    </recommendedName>
</protein>
<accession>Q80YR7</accession>
<accession>B1ARX6</accession>
<accession>Q69GM2</accession>